<protein>
    <recommendedName>
        <fullName>Epithelial cell adhesion molecule</fullName>
        <shortName>Ep-CAM</shortName>
    </recommendedName>
    <alternativeName>
        <fullName>Epithelial glycoprotein 314</fullName>
        <shortName>EGP314</shortName>
        <shortName>mEGP314</shortName>
    </alternativeName>
    <alternativeName>
        <fullName>Protein 289A</fullName>
    </alternativeName>
    <alternativeName>
        <fullName>Tumor-associated calcium signal transducer 1</fullName>
    </alternativeName>
    <cdAntigenName>CD326</cdAntigenName>
</protein>
<keyword id="KW-0965">Cell junction</keyword>
<keyword id="KW-1003">Cell membrane</keyword>
<keyword id="KW-1015">Disulfide bond</keyword>
<keyword id="KW-0325">Glycoprotein</keyword>
<keyword id="KW-0472">Membrane</keyword>
<keyword id="KW-1185">Reference proteome</keyword>
<keyword id="KW-0677">Repeat</keyword>
<keyword id="KW-0732">Signal</keyword>
<keyword id="KW-0796">Tight junction</keyword>
<keyword id="KW-0812">Transmembrane</keyword>
<keyword id="KW-1133">Transmembrane helix</keyword>
<dbReference type="EMBL" id="M76124">
    <property type="protein sequence ID" value="AAA37543.1"/>
    <property type="molecule type" value="mRNA"/>
</dbReference>
<dbReference type="EMBL" id="AK145752">
    <property type="protein sequence ID" value="BAE26627.1"/>
    <property type="molecule type" value="mRNA"/>
</dbReference>
<dbReference type="EMBL" id="AK167182">
    <property type="protein sequence ID" value="BAE39317.1"/>
    <property type="molecule type" value="mRNA"/>
</dbReference>
<dbReference type="EMBL" id="BC005618">
    <property type="protein sequence ID" value="AAH05618.1"/>
    <property type="molecule type" value="mRNA"/>
</dbReference>
<dbReference type="EMBL" id="BC094465">
    <property type="protein sequence ID" value="AAH94465.1"/>
    <property type="molecule type" value="mRNA"/>
</dbReference>
<dbReference type="CCDS" id="CCDS29018.1"/>
<dbReference type="RefSeq" id="NP_032558.2">
    <property type="nucleotide sequence ID" value="NM_008532.2"/>
</dbReference>
<dbReference type="SMR" id="Q99JW5"/>
<dbReference type="FunCoup" id="Q99JW5">
    <property type="interactions" value="246"/>
</dbReference>
<dbReference type="IntAct" id="Q99JW5">
    <property type="interactions" value="3"/>
</dbReference>
<dbReference type="STRING" id="10090.ENSMUSP00000061935"/>
<dbReference type="GlyCosmos" id="Q99JW5">
    <property type="glycosylation" value="2 sites, No reported glycans"/>
</dbReference>
<dbReference type="GlyGen" id="Q99JW5">
    <property type="glycosylation" value="2 sites, 2 N-linked glycans (2 sites)"/>
</dbReference>
<dbReference type="iPTMnet" id="Q99JW5"/>
<dbReference type="PhosphoSitePlus" id="Q99JW5"/>
<dbReference type="jPOST" id="Q99JW5"/>
<dbReference type="PaxDb" id="10090-ENSMUSP00000061935"/>
<dbReference type="PeptideAtlas" id="Q99JW5"/>
<dbReference type="ProteomicsDB" id="275528"/>
<dbReference type="Antibodypedia" id="3539">
    <property type="antibodies" value="4977 antibodies from 63 providers"/>
</dbReference>
<dbReference type="DNASU" id="17075"/>
<dbReference type="Ensembl" id="ENSMUST00000053577.9">
    <property type="protein sequence ID" value="ENSMUSP00000061935.9"/>
    <property type="gene ID" value="ENSMUSG00000045394.10"/>
</dbReference>
<dbReference type="Ensembl" id="ENSMUST00000234623.2">
    <property type="protein sequence ID" value="ENSMUSP00000157040.2"/>
    <property type="gene ID" value="ENSMUSG00000045394.10"/>
</dbReference>
<dbReference type="GeneID" id="17075"/>
<dbReference type="KEGG" id="mmu:17075"/>
<dbReference type="UCSC" id="uc008duy.1">
    <property type="organism name" value="mouse"/>
</dbReference>
<dbReference type="AGR" id="MGI:106653"/>
<dbReference type="CTD" id="4072"/>
<dbReference type="MGI" id="MGI:106653">
    <property type="gene designation" value="Epcam"/>
</dbReference>
<dbReference type="VEuPathDB" id="HostDB:ENSMUSG00000045394"/>
<dbReference type="eggNOG" id="ENOG502QVSU">
    <property type="taxonomic scope" value="Eukaryota"/>
</dbReference>
<dbReference type="GeneTree" id="ENSGT00390000018245"/>
<dbReference type="HOGENOM" id="CLU_075326_0_0_1"/>
<dbReference type="InParanoid" id="Q99JW5"/>
<dbReference type="OMA" id="CQCKSIG"/>
<dbReference type="OrthoDB" id="8953056at2759"/>
<dbReference type="PhylomeDB" id="Q99JW5"/>
<dbReference type="TreeFam" id="TF332767"/>
<dbReference type="Reactome" id="R-MMU-202733">
    <property type="pathway name" value="Cell surface interactions at the vascular wall"/>
</dbReference>
<dbReference type="BioGRID-ORCS" id="17075">
    <property type="hits" value="3 hits in 78 CRISPR screens"/>
</dbReference>
<dbReference type="ChiTaRS" id="Epcam">
    <property type="organism name" value="mouse"/>
</dbReference>
<dbReference type="PRO" id="PR:Q99JW5"/>
<dbReference type="Proteomes" id="UP000000589">
    <property type="component" value="Chromosome 17"/>
</dbReference>
<dbReference type="RNAct" id="Q99JW5">
    <property type="molecule type" value="protein"/>
</dbReference>
<dbReference type="Bgee" id="ENSMUSG00000045394">
    <property type="expression patterns" value="Expressed in left colon and 220 other cell types or tissues"/>
</dbReference>
<dbReference type="ExpressionAtlas" id="Q99JW5">
    <property type="expression patterns" value="baseline and differential"/>
</dbReference>
<dbReference type="GO" id="GO:0016324">
    <property type="term" value="C:apical plasma membrane"/>
    <property type="evidence" value="ECO:0000250"/>
    <property type="project" value="MGI"/>
</dbReference>
<dbReference type="GO" id="GO:0016323">
    <property type="term" value="C:basolateral plasma membrane"/>
    <property type="evidence" value="ECO:0000250"/>
    <property type="project" value="MGI"/>
</dbReference>
<dbReference type="GO" id="GO:0005923">
    <property type="term" value="C:bicellular tight junction"/>
    <property type="evidence" value="ECO:0000250"/>
    <property type="project" value="UniProtKB"/>
</dbReference>
<dbReference type="GO" id="GO:0009986">
    <property type="term" value="C:cell surface"/>
    <property type="evidence" value="ECO:0000314"/>
    <property type="project" value="MGI"/>
</dbReference>
<dbReference type="GO" id="GO:0016328">
    <property type="term" value="C:lateral plasma membrane"/>
    <property type="evidence" value="ECO:0000250"/>
    <property type="project" value="UniProtKB"/>
</dbReference>
<dbReference type="GO" id="GO:0005886">
    <property type="term" value="C:plasma membrane"/>
    <property type="evidence" value="ECO:0000250"/>
    <property type="project" value="UniProtKB"/>
</dbReference>
<dbReference type="GO" id="GO:0044877">
    <property type="term" value="F:protein-containing complex binding"/>
    <property type="evidence" value="ECO:0007669"/>
    <property type="project" value="Ensembl"/>
</dbReference>
<dbReference type="GO" id="GO:2000048">
    <property type="term" value="P:negative regulation of cell-cell adhesion mediated by cadherin"/>
    <property type="evidence" value="ECO:0007669"/>
    <property type="project" value="Ensembl"/>
</dbReference>
<dbReference type="GO" id="GO:0008284">
    <property type="term" value="P:positive regulation of cell population proliferation"/>
    <property type="evidence" value="ECO:0000250"/>
    <property type="project" value="UniProtKB"/>
</dbReference>
<dbReference type="GO" id="GO:2000648">
    <property type="term" value="P:positive regulation of stem cell proliferation"/>
    <property type="evidence" value="ECO:0007669"/>
    <property type="project" value="Ensembl"/>
</dbReference>
<dbReference type="GO" id="GO:0045944">
    <property type="term" value="P:positive regulation of transcription by RNA polymerase II"/>
    <property type="evidence" value="ECO:0007669"/>
    <property type="project" value="Ensembl"/>
</dbReference>
<dbReference type="GO" id="GO:0023019">
    <property type="term" value="P:signal transduction involved in regulation of gene expression"/>
    <property type="evidence" value="ECO:0007669"/>
    <property type="project" value="Ensembl"/>
</dbReference>
<dbReference type="GO" id="GO:0048863">
    <property type="term" value="P:stem cell differentiation"/>
    <property type="evidence" value="ECO:0007669"/>
    <property type="project" value="Ensembl"/>
</dbReference>
<dbReference type="GO" id="GO:0001657">
    <property type="term" value="P:ureteric bud development"/>
    <property type="evidence" value="ECO:0000270"/>
    <property type="project" value="UniProtKB"/>
</dbReference>
<dbReference type="CDD" id="cd00191">
    <property type="entry name" value="TY"/>
    <property type="match status" value="1"/>
</dbReference>
<dbReference type="FunFam" id="4.10.800.10:FF:000015">
    <property type="entry name" value="Epithelial cell adhesion molecule"/>
    <property type="match status" value="1"/>
</dbReference>
<dbReference type="Gene3D" id="4.10.800.10">
    <property type="entry name" value="Thyroglobulin type-1"/>
    <property type="match status" value="1"/>
</dbReference>
<dbReference type="InterPro" id="IPR049420">
    <property type="entry name" value="EPCAM-Trop-2_C"/>
</dbReference>
<dbReference type="InterPro" id="IPR043406">
    <property type="entry name" value="EPCAM/Trop-2"/>
</dbReference>
<dbReference type="InterPro" id="IPR041630">
    <property type="entry name" value="EpCAM_N"/>
</dbReference>
<dbReference type="InterPro" id="IPR000716">
    <property type="entry name" value="Thyroglobulin_1"/>
</dbReference>
<dbReference type="InterPro" id="IPR036857">
    <property type="entry name" value="Thyroglobulin_1_sf"/>
</dbReference>
<dbReference type="PANTHER" id="PTHR14168:SF2">
    <property type="entry name" value="EPITHELIAL CELL ADHESION MOLECULE"/>
    <property type="match status" value="1"/>
</dbReference>
<dbReference type="PANTHER" id="PTHR14168">
    <property type="entry name" value="TUMOR-ASSOCIATED CALCIUM SIGNAL TRANSDUCER"/>
    <property type="match status" value="1"/>
</dbReference>
<dbReference type="Pfam" id="PF21283">
    <property type="entry name" value="EPCAM-Trop-2_C"/>
    <property type="match status" value="1"/>
</dbReference>
<dbReference type="Pfam" id="PF18635">
    <property type="entry name" value="EpCAM_N"/>
    <property type="match status" value="1"/>
</dbReference>
<dbReference type="Pfam" id="PF00086">
    <property type="entry name" value="Thyroglobulin_1"/>
    <property type="match status" value="1"/>
</dbReference>
<dbReference type="SMART" id="SM00211">
    <property type="entry name" value="TY"/>
    <property type="match status" value="1"/>
</dbReference>
<dbReference type="SUPFAM" id="SSF57610">
    <property type="entry name" value="Thyroglobulin type-1 domain"/>
    <property type="match status" value="1"/>
</dbReference>
<dbReference type="PROSITE" id="PS00484">
    <property type="entry name" value="THYROGLOBULIN_1_1"/>
    <property type="match status" value="1"/>
</dbReference>
<dbReference type="PROSITE" id="PS51162">
    <property type="entry name" value="THYROGLOBULIN_1_2"/>
    <property type="match status" value="1"/>
</dbReference>
<gene>
    <name type="primary">Epcam</name>
    <name type="synonym">Tacstd1</name>
</gene>
<reference key="1">
    <citation type="journal article" date="1992" name="J. Immunol.">
        <title>A murine cDNA encodes a pan-epithelial glycoprotein that is also expressed on plasma cells.</title>
        <authorList>
            <person name="Bergsagel P.L."/>
            <person name="Victor-Kobrin C."/>
            <person name="Timblin C.R."/>
            <person name="Trepel J."/>
            <person name="Kuehl W.M."/>
        </authorList>
    </citation>
    <scope>NUCLEOTIDE SEQUENCE [MRNA]</scope>
</reference>
<reference key="2">
    <citation type="journal article" date="2005" name="Science">
        <title>The transcriptional landscape of the mammalian genome.</title>
        <authorList>
            <person name="Carninci P."/>
            <person name="Kasukawa T."/>
            <person name="Katayama S."/>
            <person name="Gough J."/>
            <person name="Frith M.C."/>
            <person name="Maeda N."/>
            <person name="Oyama R."/>
            <person name="Ravasi T."/>
            <person name="Lenhard B."/>
            <person name="Wells C."/>
            <person name="Kodzius R."/>
            <person name="Shimokawa K."/>
            <person name="Bajic V.B."/>
            <person name="Brenner S.E."/>
            <person name="Batalov S."/>
            <person name="Forrest A.R."/>
            <person name="Zavolan M."/>
            <person name="Davis M.J."/>
            <person name="Wilming L.G."/>
            <person name="Aidinis V."/>
            <person name="Allen J.E."/>
            <person name="Ambesi-Impiombato A."/>
            <person name="Apweiler R."/>
            <person name="Aturaliya R.N."/>
            <person name="Bailey T.L."/>
            <person name="Bansal M."/>
            <person name="Baxter L."/>
            <person name="Beisel K.W."/>
            <person name="Bersano T."/>
            <person name="Bono H."/>
            <person name="Chalk A.M."/>
            <person name="Chiu K.P."/>
            <person name="Choudhary V."/>
            <person name="Christoffels A."/>
            <person name="Clutterbuck D.R."/>
            <person name="Crowe M.L."/>
            <person name="Dalla E."/>
            <person name="Dalrymple B.P."/>
            <person name="de Bono B."/>
            <person name="Della Gatta G."/>
            <person name="di Bernardo D."/>
            <person name="Down T."/>
            <person name="Engstrom P."/>
            <person name="Fagiolini M."/>
            <person name="Faulkner G."/>
            <person name="Fletcher C.F."/>
            <person name="Fukushima T."/>
            <person name="Furuno M."/>
            <person name="Futaki S."/>
            <person name="Gariboldi M."/>
            <person name="Georgii-Hemming P."/>
            <person name="Gingeras T.R."/>
            <person name="Gojobori T."/>
            <person name="Green R.E."/>
            <person name="Gustincich S."/>
            <person name="Harbers M."/>
            <person name="Hayashi Y."/>
            <person name="Hensch T.K."/>
            <person name="Hirokawa N."/>
            <person name="Hill D."/>
            <person name="Huminiecki L."/>
            <person name="Iacono M."/>
            <person name="Ikeo K."/>
            <person name="Iwama A."/>
            <person name="Ishikawa T."/>
            <person name="Jakt M."/>
            <person name="Kanapin A."/>
            <person name="Katoh M."/>
            <person name="Kawasawa Y."/>
            <person name="Kelso J."/>
            <person name="Kitamura H."/>
            <person name="Kitano H."/>
            <person name="Kollias G."/>
            <person name="Krishnan S.P."/>
            <person name="Kruger A."/>
            <person name="Kummerfeld S.K."/>
            <person name="Kurochkin I.V."/>
            <person name="Lareau L.F."/>
            <person name="Lazarevic D."/>
            <person name="Lipovich L."/>
            <person name="Liu J."/>
            <person name="Liuni S."/>
            <person name="McWilliam S."/>
            <person name="Madan Babu M."/>
            <person name="Madera M."/>
            <person name="Marchionni L."/>
            <person name="Matsuda H."/>
            <person name="Matsuzawa S."/>
            <person name="Miki H."/>
            <person name="Mignone F."/>
            <person name="Miyake S."/>
            <person name="Morris K."/>
            <person name="Mottagui-Tabar S."/>
            <person name="Mulder N."/>
            <person name="Nakano N."/>
            <person name="Nakauchi H."/>
            <person name="Ng P."/>
            <person name="Nilsson R."/>
            <person name="Nishiguchi S."/>
            <person name="Nishikawa S."/>
            <person name="Nori F."/>
            <person name="Ohara O."/>
            <person name="Okazaki Y."/>
            <person name="Orlando V."/>
            <person name="Pang K.C."/>
            <person name="Pavan W.J."/>
            <person name="Pavesi G."/>
            <person name="Pesole G."/>
            <person name="Petrovsky N."/>
            <person name="Piazza S."/>
            <person name="Reed J."/>
            <person name="Reid J.F."/>
            <person name="Ring B.Z."/>
            <person name="Ringwald M."/>
            <person name="Rost B."/>
            <person name="Ruan Y."/>
            <person name="Salzberg S.L."/>
            <person name="Sandelin A."/>
            <person name="Schneider C."/>
            <person name="Schoenbach C."/>
            <person name="Sekiguchi K."/>
            <person name="Semple C.A."/>
            <person name="Seno S."/>
            <person name="Sessa L."/>
            <person name="Sheng Y."/>
            <person name="Shibata Y."/>
            <person name="Shimada H."/>
            <person name="Shimada K."/>
            <person name="Silva D."/>
            <person name="Sinclair B."/>
            <person name="Sperling S."/>
            <person name="Stupka E."/>
            <person name="Sugiura K."/>
            <person name="Sultana R."/>
            <person name="Takenaka Y."/>
            <person name="Taki K."/>
            <person name="Tammoja K."/>
            <person name="Tan S.L."/>
            <person name="Tang S."/>
            <person name="Taylor M.S."/>
            <person name="Tegner J."/>
            <person name="Teichmann S.A."/>
            <person name="Ueda H.R."/>
            <person name="van Nimwegen E."/>
            <person name="Verardo R."/>
            <person name="Wei C.L."/>
            <person name="Yagi K."/>
            <person name="Yamanishi H."/>
            <person name="Zabarovsky E."/>
            <person name="Zhu S."/>
            <person name="Zimmer A."/>
            <person name="Hide W."/>
            <person name="Bult C."/>
            <person name="Grimmond S.M."/>
            <person name="Teasdale R.D."/>
            <person name="Liu E.T."/>
            <person name="Brusic V."/>
            <person name="Quackenbush J."/>
            <person name="Wahlestedt C."/>
            <person name="Mattick J.S."/>
            <person name="Hume D.A."/>
            <person name="Kai C."/>
            <person name="Sasaki D."/>
            <person name="Tomaru Y."/>
            <person name="Fukuda S."/>
            <person name="Kanamori-Katayama M."/>
            <person name="Suzuki M."/>
            <person name="Aoki J."/>
            <person name="Arakawa T."/>
            <person name="Iida J."/>
            <person name="Imamura K."/>
            <person name="Itoh M."/>
            <person name="Kato T."/>
            <person name="Kawaji H."/>
            <person name="Kawagashira N."/>
            <person name="Kawashima T."/>
            <person name="Kojima M."/>
            <person name="Kondo S."/>
            <person name="Konno H."/>
            <person name="Nakano K."/>
            <person name="Ninomiya N."/>
            <person name="Nishio T."/>
            <person name="Okada M."/>
            <person name="Plessy C."/>
            <person name="Shibata K."/>
            <person name="Shiraki T."/>
            <person name="Suzuki S."/>
            <person name="Tagami M."/>
            <person name="Waki K."/>
            <person name="Watahiki A."/>
            <person name="Okamura-Oho Y."/>
            <person name="Suzuki H."/>
            <person name="Kawai J."/>
            <person name="Hayashizaki Y."/>
        </authorList>
    </citation>
    <scope>NUCLEOTIDE SEQUENCE [LARGE SCALE MRNA]</scope>
    <source>
        <strain>C57BL/6J</strain>
    </source>
</reference>
<reference key="3">
    <citation type="journal article" date="2004" name="Genome Res.">
        <title>The status, quality, and expansion of the NIH full-length cDNA project: the Mammalian Gene Collection (MGC).</title>
        <authorList>
            <consortium name="The MGC Project Team"/>
        </authorList>
    </citation>
    <scope>NUCLEOTIDE SEQUENCE [LARGE SCALE MRNA]</scope>
    <source>
        <strain>FVB/N</strain>
        <tissue>Mammary tumor</tissue>
    </source>
</reference>
<reference key="4">
    <citation type="journal article" date="2010" name="Cell">
        <title>A tissue-specific atlas of mouse protein phosphorylation and expression.</title>
        <authorList>
            <person name="Huttlin E.L."/>
            <person name="Jedrychowski M.P."/>
            <person name="Elias J.E."/>
            <person name="Goswami T."/>
            <person name="Rad R."/>
            <person name="Beausoleil S.A."/>
            <person name="Villen J."/>
            <person name="Haas W."/>
            <person name="Sowa M.E."/>
            <person name="Gygi S.P."/>
        </authorList>
    </citation>
    <scope>IDENTIFICATION BY MASS SPECTROMETRY [LARGE SCALE ANALYSIS]</scope>
    <source>
        <tissue>Kidney</tissue>
        <tissue>Lung</tissue>
        <tissue>Pancreas</tissue>
        <tissue>Testis</tissue>
    </source>
</reference>
<evidence type="ECO:0000250" key="1"/>
<evidence type="ECO:0000250" key="2">
    <source>
        <dbReference type="UniProtKB" id="P16422"/>
    </source>
</evidence>
<evidence type="ECO:0000255" key="3"/>
<evidence type="ECO:0000255" key="4">
    <source>
        <dbReference type="PROSITE-ProRule" id="PRU00500"/>
    </source>
</evidence>
<evidence type="ECO:0000305" key="5"/>
<name>EPCAM_MOUSE</name>
<organism>
    <name type="scientific">Mus musculus</name>
    <name type="common">Mouse</name>
    <dbReference type="NCBI Taxonomy" id="10090"/>
    <lineage>
        <taxon>Eukaryota</taxon>
        <taxon>Metazoa</taxon>
        <taxon>Chordata</taxon>
        <taxon>Craniata</taxon>
        <taxon>Vertebrata</taxon>
        <taxon>Euteleostomi</taxon>
        <taxon>Mammalia</taxon>
        <taxon>Eutheria</taxon>
        <taxon>Euarchontoglires</taxon>
        <taxon>Glires</taxon>
        <taxon>Rodentia</taxon>
        <taxon>Myomorpha</taxon>
        <taxon>Muroidea</taxon>
        <taxon>Muridae</taxon>
        <taxon>Murinae</taxon>
        <taxon>Mus</taxon>
        <taxon>Mus</taxon>
    </lineage>
</organism>
<accession>Q99JW5</accession>
<accession>Q61512</accession>
<comment type="function">
    <text evidence="1">May act as a physical homophilic interaction molecule between intestinal epithelial cells (IECs) and intraepithelial lymphocytes (IELs) at the mucosal epithelium for providing immunological barrier as a first line of defense against mucosal infection. Plays a role in embryonic stem cells proliferation and differentiation. Up-regulates the expression of FABP5, MYC and cyclins A and E (By similarity).</text>
</comment>
<comment type="subunit">
    <text evidence="1">Monomer. Interacts with phosphorylated CLDN7 (By similarity).</text>
</comment>
<comment type="subcellular location">
    <subcellularLocation>
        <location evidence="2">Lateral cell membrane</location>
        <topology evidence="2">Single-pass type I membrane protein</topology>
    </subcellularLocation>
    <subcellularLocation>
        <location evidence="2">Cell junction</location>
        <location evidence="2">Tight junction</location>
    </subcellularLocation>
    <text evidence="2">Colocalizes with CLDN7 at the lateral cell membrane and tight junction.</text>
</comment>
<comment type="PTM">
    <text evidence="1">Glycosylation at Asn-198 is crucial for protein stability.</text>
</comment>
<comment type="similarity">
    <text evidence="5">Belongs to the EPCAM family.</text>
</comment>
<sequence length="315" mass="35019">MAGPQALAFGLLLAVVTATLAAAQRDCVCDNYKLATSCSLNEYGECQCTSYGTQNTVICSKLASKCLAMKAEMTHSKSGRRIKPEGAIQNNDGLYDPDCDEQGLFKAKQCNGTATCWCVNTAGVRRTDKDTEITCSERVRTYWIIIELKHKERESPYDHQSLQTALQEAFTSRYKLNQKFIKNIMYENNVITIDLMQNSSQKTQDDVDIADVAYYFEKDVKGESLFHSSKSMDLRVNGEPLDLDPGQTLIYYVDEKAPEFSMQGLTAGIIAVIVVVSLAVIAGIVVLVISTRKKSAKYEKAEIKEMGEIHRELNA</sequence>
<proteinExistence type="evidence at protein level"/>
<feature type="signal peptide" evidence="3">
    <location>
        <begin position="1"/>
        <end position="23"/>
    </location>
</feature>
<feature type="chain" id="PRO_0000380183" description="Epithelial cell adhesion molecule">
    <location>
        <begin position="24"/>
        <end position="315"/>
    </location>
</feature>
<feature type="topological domain" description="Extracellular" evidence="3">
    <location>
        <begin position="24"/>
        <end position="266"/>
    </location>
</feature>
<feature type="transmembrane region" description="Helical" evidence="3">
    <location>
        <begin position="267"/>
        <end position="289"/>
    </location>
</feature>
<feature type="topological domain" description="Cytoplasmic" evidence="3">
    <location>
        <begin position="290"/>
        <end position="315"/>
    </location>
</feature>
<feature type="domain" description="Thyroglobulin type-1" evidence="4">
    <location>
        <begin position="63"/>
        <end position="135"/>
    </location>
</feature>
<feature type="glycosylation site" description="N-linked (GlcNAc...) asparagine" evidence="3">
    <location>
        <position position="111"/>
    </location>
</feature>
<feature type="glycosylation site" description="N-linked (GlcNAc...) asparagine" evidence="3">
    <location>
        <position position="198"/>
    </location>
</feature>
<feature type="disulfide bond" evidence="4">
    <location>
        <begin position="27"/>
        <end position="46"/>
    </location>
</feature>
<feature type="disulfide bond" evidence="4">
    <location>
        <begin position="29"/>
        <end position="59"/>
    </location>
</feature>
<feature type="disulfide bond" evidence="4">
    <location>
        <begin position="38"/>
        <end position="48"/>
    </location>
</feature>
<feature type="disulfide bond" evidence="4">
    <location>
        <begin position="66"/>
        <end position="99"/>
    </location>
</feature>
<feature type="disulfide bond" evidence="4">
    <location>
        <begin position="110"/>
        <end position="116"/>
    </location>
</feature>
<feature type="disulfide bond" evidence="4">
    <location>
        <begin position="118"/>
        <end position="135"/>
    </location>
</feature>
<feature type="sequence conflict" description="In Ref. 1; AAA37543." evidence="5" ref="1">
    <location>
        <position position="87"/>
    </location>
</feature>